<dbReference type="EC" id="2.5.1.78" evidence="1"/>
<dbReference type="EMBL" id="CP000264">
    <property type="protein sequence ID" value="ABD56330.1"/>
    <property type="molecule type" value="Genomic_DNA"/>
</dbReference>
<dbReference type="RefSeq" id="WP_011456532.1">
    <property type="nucleotide sequence ID" value="NC_007802.1"/>
</dbReference>
<dbReference type="SMR" id="Q28LT2"/>
<dbReference type="STRING" id="290400.Jann_3413"/>
<dbReference type="KEGG" id="jan:Jann_3413"/>
<dbReference type="eggNOG" id="COG0054">
    <property type="taxonomic scope" value="Bacteria"/>
</dbReference>
<dbReference type="HOGENOM" id="CLU_089358_1_2_5"/>
<dbReference type="OrthoDB" id="9809709at2"/>
<dbReference type="UniPathway" id="UPA00275">
    <property type="reaction ID" value="UER00404"/>
</dbReference>
<dbReference type="Proteomes" id="UP000008326">
    <property type="component" value="Chromosome"/>
</dbReference>
<dbReference type="GO" id="GO:0005829">
    <property type="term" value="C:cytosol"/>
    <property type="evidence" value="ECO:0007669"/>
    <property type="project" value="TreeGrafter"/>
</dbReference>
<dbReference type="GO" id="GO:0009349">
    <property type="term" value="C:riboflavin synthase complex"/>
    <property type="evidence" value="ECO:0007669"/>
    <property type="project" value="InterPro"/>
</dbReference>
<dbReference type="GO" id="GO:0000906">
    <property type="term" value="F:6,7-dimethyl-8-ribityllumazine synthase activity"/>
    <property type="evidence" value="ECO:0007669"/>
    <property type="project" value="UniProtKB-UniRule"/>
</dbReference>
<dbReference type="GO" id="GO:0009231">
    <property type="term" value="P:riboflavin biosynthetic process"/>
    <property type="evidence" value="ECO:0007669"/>
    <property type="project" value="UniProtKB-UniRule"/>
</dbReference>
<dbReference type="CDD" id="cd09209">
    <property type="entry name" value="Lumazine_synthase-I"/>
    <property type="match status" value="1"/>
</dbReference>
<dbReference type="Gene3D" id="3.40.50.960">
    <property type="entry name" value="Lumazine/riboflavin synthase"/>
    <property type="match status" value="1"/>
</dbReference>
<dbReference type="HAMAP" id="MF_00178">
    <property type="entry name" value="Lumazine_synth"/>
    <property type="match status" value="1"/>
</dbReference>
<dbReference type="InterPro" id="IPR034964">
    <property type="entry name" value="LS"/>
</dbReference>
<dbReference type="InterPro" id="IPR002180">
    <property type="entry name" value="LS/RS"/>
</dbReference>
<dbReference type="InterPro" id="IPR036467">
    <property type="entry name" value="LS/RS_sf"/>
</dbReference>
<dbReference type="NCBIfam" id="NF000814">
    <property type="entry name" value="PRK00061.2-2"/>
    <property type="match status" value="1"/>
</dbReference>
<dbReference type="PANTHER" id="PTHR21058:SF0">
    <property type="entry name" value="6,7-DIMETHYL-8-RIBITYLLUMAZINE SYNTHASE"/>
    <property type="match status" value="1"/>
</dbReference>
<dbReference type="PANTHER" id="PTHR21058">
    <property type="entry name" value="6,7-DIMETHYL-8-RIBITYLLUMAZINE SYNTHASE DMRL SYNTHASE LUMAZINE SYNTHASE"/>
    <property type="match status" value="1"/>
</dbReference>
<dbReference type="Pfam" id="PF00885">
    <property type="entry name" value="DMRL_synthase"/>
    <property type="match status" value="1"/>
</dbReference>
<dbReference type="SUPFAM" id="SSF52121">
    <property type="entry name" value="Lumazine synthase"/>
    <property type="match status" value="1"/>
</dbReference>
<accession>Q28LT2</accession>
<evidence type="ECO:0000255" key="1">
    <source>
        <dbReference type="HAMAP-Rule" id="MF_00178"/>
    </source>
</evidence>
<organism>
    <name type="scientific">Jannaschia sp. (strain CCS1)</name>
    <dbReference type="NCBI Taxonomy" id="290400"/>
    <lineage>
        <taxon>Bacteria</taxon>
        <taxon>Pseudomonadati</taxon>
        <taxon>Pseudomonadota</taxon>
        <taxon>Alphaproteobacteria</taxon>
        <taxon>Rhodobacterales</taxon>
        <taxon>Roseobacteraceae</taxon>
        <taxon>Jannaschia</taxon>
    </lineage>
</organism>
<proteinExistence type="inferred from homology"/>
<reference key="1">
    <citation type="submission" date="2006-02" db="EMBL/GenBank/DDBJ databases">
        <title>Complete sequence of chromosome of Jannaschia sp. CCS1.</title>
        <authorList>
            <consortium name="US DOE Joint Genome Institute"/>
            <person name="Copeland A."/>
            <person name="Lucas S."/>
            <person name="Lapidus A."/>
            <person name="Barry K."/>
            <person name="Detter J.C."/>
            <person name="Glavina del Rio T."/>
            <person name="Hammon N."/>
            <person name="Israni S."/>
            <person name="Pitluck S."/>
            <person name="Brettin T."/>
            <person name="Bruce D."/>
            <person name="Han C."/>
            <person name="Tapia R."/>
            <person name="Gilna P."/>
            <person name="Chertkov O."/>
            <person name="Saunders E."/>
            <person name="Schmutz J."/>
            <person name="Larimer F."/>
            <person name="Land M."/>
            <person name="Kyrpides N."/>
            <person name="Lykidis A."/>
            <person name="Moran M.A."/>
            <person name="Belas R."/>
            <person name="Ye W."/>
            <person name="Buchan A."/>
            <person name="Gonzalez J.M."/>
            <person name="Schell M.A."/>
            <person name="Richardson P."/>
        </authorList>
    </citation>
    <scope>NUCLEOTIDE SEQUENCE [LARGE SCALE GENOMIC DNA]</scope>
    <source>
        <strain>CCS1</strain>
    </source>
</reference>
<name>RISB_JANSC</name>
<protein>
    <recommendedName>
        <fullName evidence="1">6,7-dimethyl-8-ribityllumazine synthase</fullName>
        <shortName evidence="1">DMRL synthase</shortName>
        <shortName evidence="1">LS</shortName>
        <shortName evidence="1">Lumazine synthase</shortName>
        <ecNumber evidence="1">2.5.1.78</ecNumber>
    </recommendedName>
</protein>
<comment type="function">
    <text evidence="1">Catalyzes the formation of 6,7-dimethyl-8-ribityllumazine by condensation of 5-amino-6-(D-ribitylamino)uracil with 3,4-dihydroxy-2-butanone 4-phosphate. This is the penultimate step in the biosynthesis of riboflavin.</text>
</comment>
<comment type="catalytic activity">
    <reaction evidence="1">
        <text>(2S)-2-hydroxy-3-oxobutyl phosphate + 5-amino-6-(D-ribitylamino)uracil = 6,7-dimethyl-8-(1-D-ribityl)lumazine + phosphate + 2 H2O + H(+)</text>
        <dbReference type="Rhea" id="RHEA:26152"/>
        <dbReference type="ChEBI" id="CHEBI:15377"/>
        <dbReference type="ChEBI" id="CHEBI:15378"/>
        <dbReference type="ChEBI" id="CHEBI:15934"/>
        <dbReference type="ChEBI" id="CHEBI:43474"/>
        <dbReference type="ChEBI" id="CHEBI:58201"/>
        <dbReference type="ChEBI" id="CHEBI:58830"/>
        <dbReference type="EC" id="2.5.1.78"/>
    </reaction>
</comment>
<comment type="pathway">
    <text evidence="1">Cofactor biosynthesis; riboflavin biosynthesis; riboflavin from 2-hydroxy-3-oxobutyl phosphate and 5-amino-6-(D-ribitylamino)uracil: step 1/2.</text>
</comment>
<comment type="similarity">
    <text evidence="1">Belongs to the DMRL synthase family.</text>
</comment>
<gene>
    <name evidence="1" type="primary">ribH</name>
    <name type="ordered locus">Jann_3413</name>
</gene>
<sequence length="178" mass="18299">MAGHSDNDLGLPSFDKPVKVAIVIAPYYTSISEAQLAAARGVLDAADVAHETIEVPGSLEVPTAIGIAHRMSNFDGFVALGCVIRGATSHYDVVVNESSRALTMLGLQGICIGNGIITVETRDQAEERADGGRLNTAGGAAEAALHLIALTRSYGAPKGALGFKPRGTIEIADGSSQA</sequence>
<keyword id="KW-1185">Reference proteome</keyword>
<keyword id="KW-0686">Riboflavin biosynthesis</keyword>
<keyword id="KW-0808">Transferase</keyword>
<feature type="chain" id="PRO_1000040435" description="6,7-dimethyl-8-ribityllumazine synthase">
    <location>
        <begin position="1"/>
        <end position="178"/>
    </location>
</feature>
<feature type="active site" description="Proton donor" evidence="1">
    <location>
        <position position="90"/>
    </location>
</feature>
<feature type="binding site" evidence="1">
    <location>
        <position position="27"/>
    </location>
    <ligand>
        <name>5-amino-6-(D-ribitylamino)uracil</name>
        <dbReference type="ChEBI" id="CHEBI:15934"/>
    </ligand>
</feature>
<feature type="binding site" evidence="1">
    <location>
        <begin position="58"/>
        <end position="60"/>
    </location>
    <ligand>
        <name>5-amino-6-(D-ribitylamino)uracil</name>
        <dbReference type="ChEBI" id="CHEBI:15934"/>
    </ligand>
</feature>
<feature type="binding site" evidence="1">
    <location>
        <begin position="82"/>
        <end position="84"/>
    </location>
    <ligand>
        <name>5-amino-6-(D-ribitylamino)uracil</name>
        <dbReference type="ChEBI" id="CHEBI:15934"/>
    </ligand>
</feature>
<feature type="binding site" evidence="1">
    <location>
        <begin position="87"/>
        <end position="88"/>
    </location>
    <ligand>
        <name>(2S)-2-hydroxy-3-oxobutyl phosphate</name>
        <dbReference type="ChEBI" id="CHEBI:58830"/>
    </ligand>
</feature>
<feature type="binding site" evidence="1">
    <location>
        <position position="114"/>
    </location>
    <ligand>
        <name>5-amino-6-(D-ribitylamino)uracil</name>
        <dbReference type="ChEBI" id="CHEBI:15934"/>
    </ligand>
</feature>
<feature type="binding site" evidence="1">
    <location>
        <position position="128"/>
    </location>
    <ligand>
        <name>(2S)-2-hydroxy-3-oxobutyl phosphate</name>
        <dbReference type="ChEBI" id="CHEBI:58830"/>
    </ligand>
</feature>